<protein>
    <recommendedName>
        <fullName>Putative uncharacterized protein YOR050C</fullName>
    </recommendedName>
</protein>
<sequence>MASVKQTNKTLREGNPEHSTIFYIRGSILAPSYFLPDFARTLFPRKDMVSVGPLFPIIFAHSDSAAIDMSGTTGKRRCLVVVAAPIVDILISNRTSCTKSCASAARPCLEGSVAP</sequence>
<reference key="1">
    <citation type="journal article" date="1997" name="Yeast">
        <title>The sequence of a 54.7 kb fragment of yeast chromosome XV reveals the presence of two tRNAs and 24 new open reading frames.</title>
        <authorList>
            <person name="Valens M."/>
            <person name="Bohn C."/>
            <person name="Daignan-Fornier B."/>
            <person name="Dang V.-D."/>
            <person name="Bolotin-Fukuhara M."/>
        </authorList>
    </citation>
    <scope>NUCLEOTIDE SEQUENCE [GENOMIC DNA]</scope>
    <source>
        <strain>ATCC 96604 / S288c / FY1679</strain>
    </source>
</reference>
<reference key="2">
    <citation type="journal article" date="1997" name="Nature">
        <title>The nucleotide sequence of Saccharomyces cerevisiae chromosome XV.</title>
        <authorList>
            <person name="Dujon B."/>
            <person name="Albermann K."/>
            <person name="Aldea M."/>
            <person name="Alexandraki D."/>
            <person name="Ansorge W."/>
            <person name="Arino J."/>
            <person name="Benes V."/>
            <person name="Bohn C."/>
            <person name="Bolotin-Fukuhara M."/>
            <person name="Bordonne R."/>
            <person name="Boyer J."/>
            <person name="Camasses A."/>
            <person name="Casamayor A."/>
            <person name="Casas C."/>
            <person name="Cheret G."/>
            <person name="Cziepluch C."/>
            <person name="Daignan-Fornier B."/>
            <person name="Dang V.-D."/>
            <person name="de Haan M."/>
            <person name="Delius H."/>
            <person name="Durand P."/>
            <person name="Fairhead C."/>
            <person name="Feldmann H."/>
            <person name="Gaillon L."/>
            <person name="Galisson F."/>
            <person name="Gamo F.-J."/>
            <person name="Gancedo C."/>
            <person name="Goffeau A."/>
            <person name="Goulding S.E."/>
            <person name="Grivell L.A."/>
            <person name="Habbig B."/>
            <person name="Hand N.J."/>
            <person name="Hani J."/>
            <person name="Hattenhorst U."/>
            <person name="Hebling U."/>
            <person name="Hernando Y."/>
            <person name="Herrero E."/>
            <person name="Heumann K."/>
            <person name="Hiesel R."/>
            <person name="Hilger F."/>
            <person name="Hofmann B."/>
            <person name="Hollenberg C.P."/>
            <person name="Hughes B."/>
            <person name="Jauniaux J.-C."/>
            <person name="Kalogeropoulos A."/>
            <person name="Katsoulou C."/>
            <person name="Kordes E."/>
            <person name="Lafuente M.J."/>
            <person name="Landt O."/>
            <person name="Louis E.J."/>
            <person name="Maarse A.C."/>
            <person name="Madania A."/>
            <person name="Mannhaupt G."/>
            <person name="Marck C."/>
            <person name="Martin R.P."/>
            <person name="Mewes H.-W."/>
            <person name="Michaux G."/>
            <person name="Paces V."/>
            <person name="Parle-McDermott A.G."/>
            <person name="Pearson B.M."/>
            <person name="Perrin A."/>
            <person name="Pettersson B."/>
            <person name="Poch O."/>
            <person name="Pohl T.M."/>
            <person name="Poirey R."/>
            <person name="Portetelle D."/>
            <person name="Pujol A."/>
            <person name="Purnelle B."/>
            <person name="Ramezani Rad M."/>
            <person name="Rechmann S."/>
            <person name="Schwager C."/>
            <person name="Schweizer M."/>
            <person name="Sor F."/>
            <person name="Sterky F."/>
            <person name="Tarassov I.A."/>
            <person name="Teodoru C."/>
            <person name="Tettelin H."/>
            <person name="Thierry A."/>
            <person name="Tobiasch E."/>
            <person name="Tzermia M."/>
            <person name="Uhlen M."/>
            <person name="Unseld M."/>
            <person name="Valens M."/>
            <person name="Vandenbol M."/>
            <person name="Vetter I."/>
            <person name="Vlcek C."/>
            <person name="Voet M."/>
            <person name="Volckaert G."/>
            <person name="Voss H."/>
            <person name="Wambutt R."/>
            <person name="Wedler H."/>
            <person name="Wiemann S."/>
            <person name="Winsor B."/>
            <person name="Wolfe K.H."/>
            <person name="Zollner A."/>
            <person name="Zumstein E."/>
            <person name="Kleine K."/>
        </authorList>
    </citation>
    <scope>NUCLEOTIDE SEQUENCE [LARGE SCALE GENOMIC DNA]</scope>
    <source>
        <strain>ATCC 204508 / S288c</strain>
    </source>
</reference>
<reference key="3">
    <citation type="journal article" date="2014" name="G3 (Bethesda)">
        <title>The reference genome sequence of Saccharomyces cerevisiae: Then and now.</title>
        <authorList>
            <person name="Engel S.R."/>
            <person name="Dietrich F.S."/>
            <person name="Fisk D.G."/>
            <person name="Binkley G."/>
            <person name="Balakrishnan R."/>
            <person name="Costanzo M.C."/>
            <person name="Dwight S.S."/>
            <person name="Hitz B.C."/>
            <person name="Karra K."/>
            <person name="Nash R.S."/>
            <person name="Weng S."/>
            <person name="Wong E.D."/>
            <person name="Lloyd P."/>
            <person name="Skrzypek M.S."/>
            <person name="Miyasato S.R."/>
            <person name="Simison M."/>
            <person name="Cherry J.M."/>
        </authorList>
    </citation>
    <scope>GENOME REANNOTATION</scope>
    <source>
        <strain>ATCC 204508 / S288c</strain>
    </source>
</reference>
<reference key="4">
    <citation type="journal article" date="2007" name="Genome Res.">
        <title>Approaching a complete repository of sequence-verified protein-encoding clones for Saccharomyces cerevisiae.</title>
        <authorList>
            <person name="Hu Y."/>
            <person name="Rolfs A."/>
            <person name="Bhullar B."/>
            <person name="Murthy T.V.S."/>
            <person name="Zhu C."/>
            <person name="Berger M.F."/>
            <person name="Camargo A.A."/>
            <person name="Kelley F."/>
            <person name="McCarron S."/>
            <person name="Jepson D."/>
            <person name="Richardson A."/>
            <person name="Raphael J."/>
            <person name="Moreira D."/>
            <person name="Taycher E."/>
            <person name="Zuo D."/>
            <person name="Mohr S."/>
            <person name="Kane M.F."/>
            <person name="Williamson J."/>
            <person name="Simpson A.J.G."/>
            <person name="Bulyk M.L."/>
            <person name="Harlow E."/>
            <person name="Marsischky G."/>
            <person name="Kolodner R.D."/>
            <person name="LaBaer J."/>
        </authorList>
    </citation>
    <scope>NUCLEOTIDE SEQUENCE [GENOMIC DNA]</scope>
    <source>
        <strain>ATCC 204508 / S288c</strain>
    </source>
</reference>
<accession>Q08419</accession>
<accession>O00015</accession>
<dbReference type="EMBL" id="Z70678">
    <property type="protein sequence ID" value="CAA94535.1"/>
    <property type="molecule type" value="Genomic_DNA"/>
</dbReference>
<dbReference type="EMBL" id="Z74958">
    <property type="protein sequence ID" value="CAA99242.1"/>
    <property type="molecule type" value="Genomic_DNA"/>
</dbReference>
<dbReference type="EMBL" id="AY693273">
    <property type="protein sequence ID" value="AAT93292.1"/>
    <property type="molecule type" value="Genomic_DNA"/>
</dbReference>
<dbReference type="PIR" id="S66924">
    <property type="entry name" value="S66924"/>
</dbReference>
<dbReference type="DIP" id="DIP-4174N"/>
<dbReference type="STRING" id="4932.YOR050C"/>
<dbReference type="PaxDb" id="4932-YOR050C"/>
<dbReference type="EnsemblFungi" id="YOR050C_mRNA">
    <property type="protein sequence ID" value="YOR050C"/>
    <property type="gene ID" value="YOR050C"/>
</dbReference>
<dbReference type="AGR" id="SGD:S000005576"/>
<dbReference type="SGD" id="S000005576">
    <property type="gene designation" value="YOR050C"/>
</dbReference>
<dbReference type="HOGENOM" id="CLU_2110844_0_0_1"/>
<dbReference type="OMA" id="TTGKRRC"/>
<comment type="caution">
    <text evidence="1">Product of a dubious gene prediction unlikely to encode a functional protein. Because of that it is not part of the S.cerevisiae S288c complete/reference proteome set.</text>
</comment>
<proteinExistence type="uncertain"/>
<evidence type="ECO:0000305" key="1">
    <source>
    </source>
</evidence>
<feature type="chain" id="PRO_0000299706" description="Putative uncharacterized protein YOR050C">
    <location>
        <begin position="1"/>
        <end position="115"/>
    </location>
</feature>
<organism>
    <name type="scientific">Saccharomyces cerevisiae (strain ATCC 204508 / S288c)</name>
    <name type="common">Baker's yeast</name>
    <dbReference type="NCBI Taxonomy" id="559292"/>
    <lineage>
        <taxon>Eukaryota</taxon>
        <taxon>Fungi</taxon>
        <taxon>Dikarya</taxon>
        <taxon>Ascomycota</taxon>
        <taxon>Saccharomycotina</taxon>
        <taxon>Saccharomycetes</taxon>
        <taxon>Saccharomycetales</taxon>
        <taxon>Saccharomycetaceae</taxon>
        <taxon>Saccharomyces</taxon>
    </lineage>
</organism>
<gene>
    <name type="ordered locus">YOR050C</name>
    <name type="ORF">O2790</name>
    <name type="ORF">YOR29-01</name>
</gene>
<name>YOR50_YEAST</name>